<sequence length="99" mass="11015">MNQERVFKVLLGPHISEKATVLADKQGQFVFKVATDATKLEIKKAVESLFNVKVERVTTQNVLGKSKRTARGLGKRNDWKKAVISLQPGQDLDFTSSAE</sequence>
<name>RL23_ECTM1</name>
<evidence type="ECO:0000255" key="1">
    <source>
        <dbReference type="HAMAP-Rule" id="MF_01369"/>
    </source>
</evidence>
<evidence type="ECO:0000305" key="2"/>
<gene>
    <name evidence="1" type="primary">rplW</name>
    <name type="ordered locus">Pmen_3907</name>
</gene>
<comment type="function">
    <text evidence="1">One of the early assembly proteins it binds 23S rRNA. One of the proteins that surrounds the polypeptide exit tunnel on the outside of the ribosome. Forms the main docking site for trigger factor binding to the ribosome.</text>
</comment>
<comment type="subunit">
    <text evidence="1">Part of the 50S ribosomal subunit. Contacts protein L29, and trigger factor when it is bound to the ribosome.</text>
</comment>
<comment type="similarity">
    <text evidence="1">Belongs to the universal ribosomal protein uL23 family.</text>
</comment>
<keyword id="KW-0687">Ribonucleoprotein</keyword>
<keyword id="KW-0689">Ribosomal protein</keyword>
<keyword id="KW-0694">RNA-binding</keyword>
<keyword id="KW-0699">rRNA-binding</keyword>
<accession>A4XZ88</accession>
<proteinExistence type="inferred from homology"/>
<dbReference type="EMBL" id="CP000680">
    <property type="protein sequence ID" value="ABP86654.1"/>
    <property type="molecule type" value="Genomic_DNA"/>
</dbReference>
<dbReference type="SMR" id="A4XZ88"/>
<dbReference type="STRING" id="399739.Pmen_3907"/>
<dbReference type="KEGG" id="pmy:Pmen_3907"/>
<dbReference type="eggNOG" id="COG0089">
    <property type="taxonomic scope" value="Bacteria"/>
</dbReference>
<dbReference type="HOGENOM" id="CLU_037562_3_1_6"/>
<dbReference type="OrthoDB" id="9793353at2"/>
<dbReference type="GO" id="GO:1990904">
    <property type="term" value="C:ribonucleoprotein complex"/>
    <property type="evidence" value="ECO:0007669"/>
    <property type="project" value="UniProtKB-KW"/>
</dbReference>
<dbReference type="GO" id="GO:0005840">
    <property type="term" value="C:ribosome"/>
    <property type="evidence" value="ECO:0007669"/>
    <property type="project" value="UniProtKB-KW"/>
</dbReference>
<dbReference type="GO" id="GO:0019843">
    <property type="term" value="F:rRNA binding"/>
    <property type="evidence" value="ECO:0007669"/>
    <property type="project" value="UniProtKB-UniRule"/>
</dbReference>
<dbReference type="GO" id="GO:0003735">
    <property type="term" value="F:structural constituent of ribosome"/>
    <property type="evidence" value="ECO:0007669"/>
    <property type="project" value="InterPro"/>
</dbReference>
<dbReference type="GO" id="GO:0006412">
    <property type="term" value="P:translation"/>
    <property type="evidence" value="ECO:0007669"/>
    <property type="project" value="UniProtKB-UniRule"/>
</dbReference>
<dbReference type="FunFam" id="3.30.70.330:FF:000001">
    <property type="entry name" value="50S ribosomal protein L23"/>
    <property type="match status" value="1"/>
</dbReference>
<dbReference type="Gene3D" id="3.30.70.330">
    <property type="match status" value="1"/>
</dbReference>
<dbReference type="HAMAP" id="MF_01369_B">
    <property type="entry name" value="Ribosomal_uL23_B"/>
    <property type="match status" value="1"/>
</dbReference>
<dbReference type="InterPro" id="IPR012677">
    <property type="entry name" value="Nucleotide-bd_a/b_plait_sf"/>
</dbReference>
<dbReference type="InterPro" id="IPR013025">
    <property type="entry name" value="Ribosomal_uL23-like"/>
</dbReference>
<dbReference type="InterPro" id="IPR012678">
    <property type="entry name" value="Ribosomal_uL23/eL15/eS24_sf"/>
</dbReference>
<dbReference type="NCBIfam" id="NF004359">
    <property type="entry name" value="PRK05738.1-3"/>
    <property type="match status" value="1"/>
</dbReference>
<dbReference type="NCBIfam" id="NF004363">
    <property type="entry name" value="PRK05738.2-4"/>
    <property type="match status" value="1"/>
</dbReference>
<dbReference type="PANTHER" id="PTHR11620">
    <property type="entry name" value="60S RIBOSOMAL PROTEIN L23A"/>
    <property type="match status" value="1"/>
</dbReference>
<dbReference type="Pfam" id="PF00276">
    <property type="entry name" value="Ribosomal_L23"/>
    <property type="match status" value="1"/>
</dbReference>
<dbReference type="SUPFAM" id="SSF54189">
    <property type="entry name" value="Ribosomal proteins S24e, L23 and L15e"/>
    <property type="match status" value="1"/>
</dbReference>
<organism>
    <name type="scientific">Ectopseudomonas mendocina (strain ymp)</name>
    <name type="common">Pseudomonas mendocina</name>
    <dbReference type="NCBI Taxonomy" id="399739"/>
    <lineage>
        <taxon>Bacteria</taxon>
        <taxon>Pseudomonadati</taxon>
        <taxon>Pseudomonadota</taxon>
        <taxon>Gammaproteobacteria</taxon>
        <taxon>Pseudomonadales</taxon>
        <taxon>Pseudomonadaceae</taxon>
        <taxon>Ectopseudomonas</taxon>
    </lineage>
</organism>
<reference key="1">
    <citation type="submission" date="2007-04" db="EMBL/GenBank/DDBJ databases">
        <title>Complete sequence of Pseudomonas mendocina ymp.</title>
        <authorList>
            <consortium name="US DOE Joint Genome Institute"/>
            <person name="Copeland A."/>
            <person name="Lucas S."/>
            <person name="Lapidus A."/>
            <person name="Barry K."/>
            <person name="Glavina del Rio T."/>
            <person name="Dalin E."/>
            <person name="Tice H."/>
            <person name="Pitluck S."/>
            <person name="Kiss H."/>
            <person name="Brettin T."/>
            <person name="Detter J.C."/>
            <person name="Bruce D."/>
            <person name="Han C."/>
            <person name="Schmutz J."/>
            <person name="Larimer F."/>
            <person name="Land M."/>
            <person name="Hauser L."/>
            <person name="Kyrpides N."/>
            <person name="Mikhailova N."/>
            <person name="Hersman L."/>
            <person name="Dubois J."/>
            <person name="Maurice P."/>
            <person name="Richardson P."/>
        </authorList>
    </citation>
    <scope>NUCLEOTIDE SEQUENCE [LARGE SCALE GENOMIC DNA]</scope>
    <source>
        <strain>ymp</strain>
    </source>
</reference>
<feature type="chain" id="PRO_1000068141" description="Large ribosomal subunit protein uL23">
    <location>
        <begin position="1"/>
        <end position="99"/>
    </location>
</feature>
<protein>
    <recommendedName>
        <fullName evidence="1">Large ribosomal subunit protein uL23</fullName>
    </recommendedName>
    <alternativeName>
        <fullName evidence="2">50S ribosomal protein L23</fullName>
    </alternativeName>
</protein>